<evidence type="ECO:0000255" key="1">
    <source>
        <dbReference type="HAMAP-Rule" id="MF_00720"/>
    </source>
</evidence>
<name>PRIB_ACTP2</name>
<accession>A3N1H2</accession>
<dbReference type="EMBL" id="CP000569">
    <property type="protein sequence ID" value="ABN74258.1"/>
    <property type="molecule type" value="Genomic_DNA"/>
</dbReference>
<dbReference type="RefSeq" id="WP_005598106.1">
    <property type="nucleotide sequence ID" value="NC_009053.1"/>
</dbReference>
<dbReference type="SMR" id="A3N1H2"/>
<dbReference type="STRING" id="416269.APL_1170"/>
<dbReference type="EnsemblBacteria" id="ABN74258">
    <property type="protein sequence ID" value="ABN74258"/>
    <property type="gene ID" value="APL_1170"/>
</dbReference>
<dbReference type="GeneID" id="48599407"/>
<dbReference type="KEGG" id="apl:APL_1170"/>
<dbReference type="eggNOG" id="COG2965">
    <property type="taxonomic scope" value="Bacteria"/>
</dbReference>
<dbReference type="HOGENOM" id="CLU_166075_0_0_6"/>
<dbReference type="Proteomes" id="UP000001432">
    <property type="component" value="Chromosome"/>
</dbReference>
<dbReference type="GO" id="GO:1990077">
    <property type="term" value="C:primosome complex"/>
    <property type="evidence" value="ECO:0007669"/>
    <property type="project" value="UniProtKB-KW"/>
</dbReference>
<dbReference type="GO" id="GO:0003697">
    <property type="term" value="F:single-stranded DNA binding"/>
    <property type="evidence" value="ECO:0007669"/>
    <property type="project" value="UniProtKB-UniRule"/>
</dbReference>
<dbReference type="GO" id="GO:0006269">
    <property type="term" value="P:DNA replication, synthesis of primer"/>
    <property type="evidence" value="ECO:0007669"/>
    <property type="project" value="UniProtKB-KW"/>
</dbReference>
<dbReference type="Gene3D" id="2.40.50.140">
    <property type="entry name" value="Nucleic acid-binding proteins"/>
    <property type="match status" value="1"/>
</dbReference>
<dbReference type="HAMAP" id="MF_00720">
    <property type="entry name" value="PriB"/>
    <property type="match status" value="1"/>
</dbReference>
<dbReference type="InterPro" id="IPR012340">
    <property type="entry name" value="NA-bd_OB-fold"/>
</dbReference>
<dbReference type="InterPro" id="IPR000424">
    <property type="entry name" value="Primosome_PriB/ssb"/>
</dbReference>
<dbReference type="InterPro" id="IPR023646">
    <property type="entry name" value="Prisomal_replication_PriB"/>
</dbReference>
<dbReference type="NCBIfam" id="TIGR04418">
    <property type="entry name" value="PriB_gamma"/>
    <property type="match status" value="1"/>
</dbReference>
<dbReference type="Pfam" id="PF22657">
    <property type="entry name" value="SSB_1"/>
    <property type="match status" value="1"/>
</dbReference>
<dbReference type="PIRSF" id="PIRSF003135">
    <property type="entry name" value="Primosomal_n"/>
    <property type="match status" value="1"/>
</dbReference>
<dbReference type="SUPFAM" id="SSF50249">
    <property type="entry name" value="Nucleic acid-binding proteins"/>
    <property type="match status" value="1"/>
</dbReference>
<dbReference type="PROSITE" id="PS50935">
    <property type="entry name" value="SSB"/>
    <property type="match status" value="1"/>
</dbReference>
<gene>
    <name evidence="1" type="primary">priB</name>
    <name type="ordered locus">APL_1170</name>
</gene>
<sequence>MNQRKLASNSPIDNCLILSGSVASTVKQSQNPLGVPNYRFWLEHRSIQTEVNLERQAWCKIQVILNGNQFSLITQQIKLGDKIRVYGFIHTHKDYNGLSQLVVHAEHIEFIDQEKPNGTLFPSS</sequence>
<protein>
    <recommendedName>
        <fullName evidence="1">Replication restart protein PriB</fullName>
    </recommendedName>
</protein>
<reference key="1">
    <citation type="journal article" date="2008" name="J. Bacteriol.">
        <title>The complete genome sequence of Actinobacillus pleuropneumoniae L20 (serotype 5b).</title>
        <authorList>
            <person name="Foote S.J."/>
            <person name="Bosse J.T."/>
            <person name="Bouevitch A.B."/>
            <person name="Langford P.R."/>
            <person name="Young N.M."/>
            <person name="Nash J.H.E."/>
        </authorList>
    </citation>
    <scope>NUCLEOTIDE SEQUENCE [LARGE SCALE GENOMIC DNA]</scope>
    <source>
        <strain>L20</strain>
    </source>
</reference>
<feature type="chain" id="PRO_1000083270" description="Replication restart protein PriB">
    <location>
        <begin position="1"/>
        <end position="124"/>
    </location>
</feature>
<feature type="domain" description="SSB" evidence="1">
    <location>
        <begin position="12"/>
        <end position="112"/>
    </location>
</feature>
<proteinExistence type="inferred from homology"/>
<comment type="function">
    <text evidence="1">Involved in the restart of stalled replication forks, which reloads the replicative helicase on sites other than the origin of replication; the PriA-PriB pathway is the major replication restart pathway. During primosome assembly it facilitates complex formation between PriA and DnaT on DNA; stabilizes PriA on DNA. Stimulates the DNA unwinding activity of PriA helicase.</text>
</comment>
<comment type="subunit">
    <text evidence="1">Homodimer. Interacts with PriA and DnaT. Component of the replication restart primosome. Primosome assembly occurs via a 'hand-off' mechanism. PriA binds to replication forks, subsequently PriB then DnaT bind; DnaT then displaces ssDNA to generate the helicase loading substrate.</text>
</comment>
<comment type="similarity">
    <text evidence="1">Belongs to the PriB family.</text>
</comment>
<keyword id="KW-0235">DNA replication</keyword>
<keyword id="KW-0238">DNA-binding</keyword>
<keyword id="KW-0639">Primosome</keyword>
<keyword id="KW-1185">Reference proteome</keyword>
<organism>
    <name type="scientific">Actinobacillus pleuropneumoniae serotype 5b (strain L20)</name>
    <dbReference type="NCBI Taxonomy" id="416269"/>
    <lineage>
        <taxon>Bacteria</taxon>
        <taxon>Pseudomonadati</taxon>
        <taxon>Pseudomonadota</taxon>
        <taxon>Gammaproteobacteria</taxon>
        <taxon>Pasteurellales</taxon>
        <taxon>Pasteurellaceae</taxon>
        <taxon>Actinobacillus</taxon>
    </lineage>
</organism>